<protein>
    <recommendedName>
        <fullName evidence="1">Chaperonin GroEL 1</fullName>
        <ecNumber evidence="1">5.6.1.7</ecNumber>
    </recommendedName>
    <alternativeName>
        <fullName evidence="1">60 kDa chaperonin 1</fullName>
    </alternativeName>
    <alternativeName>
        <fullName evidence="1">Chaperonin-60 1</fullName>
        <shortName evidence="1">Cpn60 1</shortName>
    </alternativeName>
</protein>
<name>CH601_VIBHA</name>
<reference key="1">
    <citation type="journal article" date="2003" name="Microbiology">
        <title>Cloning and characterization of the groE heat-shock operon of the marine bacterium Vibrio harveyi.</title>
        <authorList>
            <person name="Kuchanny-Ardigo D."/>
            <person name="Lipinska B."/>
        </authorList>
    </citation>
    <scope>NUCLEOTIDE SEQUENCE [GENOMIC DNA]</scope>
</reference>
<organism>
    <name type="scientific">Vibrio harveyi</name>
    <name type="common">Beneckea harveyi</name>
    <dbReference type="NCBI Taxonomy" id="669"/>
    <lineage>
        <taxon>Bacteria</taxon>
        <taxon>Pseudomonadati</taxon>
        <taxon>Pseudomonadota</taxon>
        <taxon>Gammaproteobacteria</taxon>
        <taxon>Vibrionales</taxon>
        <taxon>Vibrionaceae</taxon>
        <taxon>Vibrio</taxon>
    </lineage>
</organism>
<keyword id="KW-0067">ATP-binding</keyword>
<keyword id="KW-0143">Chaperone</keyword>
<keyword id="KW-0963">Cytoplasm</keyword>
<keyword id="KW-0413">Isomerase</keyword>
<keyword id="KW-0547">Nucleotide-binding</keyword>
<dbReference type="EC" id="5.6.1.7" evidence="1"/>
<dbReference type="EMBL" id="AY246431">
    <property type="protein sequence ID" value="AAO88905.1"/>
    <property type="molecule type" value="Genomic_DNA"/>
</dbReference>
<dbReference type="SMR" id="Q83WI8"/>
<dbReference type="STRING" id="669.AL538_08340"/>
<dbReference type="GO" id="GO:0005737">
    <property type="term" value="C:cytoplasm"/>
    <property type="evidence" value="ECO:0007669"/>
    <property type="project" value="UniProtKB-SubCell"/>
</dbReference>
<dbReference type="GO" id="GO:0005524">
    <property type="term" value="F:ATP binding"/>
    <property type="evidence" value="ECO:0007669"/>
    <property type="project" value="UniProtKB-UniRule"/>
</dbReference>
<dbReference type="GO" id="GO:0140662">
    <property type="term" value="F:ATP-dependent protein folding chaperone"/>
    <property type="evidence" value="ECO:0007669"/>
    <property type="project" value="InterPro"/>
</dbReference>
<dbReference type="GO" id="GO:0016853">
    <property type="term" value="F:isomerase activity"/>
    <property type="evidence" value="ECO:0007669"/>
    <property type="project" value="UniProtKB-KW"/>
</dbReference>
<dbReference type="GO" id="GO:0051082">
    <property type="term" value="F:unfolded protein binding"/>
    <property type="evidence" value="ECO:0007669"/>
    <property type="project" value="UniProtKB-UniRule"/>
</dbReference>
<dbReference type="GO" id="GO:0042026">
    <property type="term" value="P:protein refolding"/>
    <property type="evidence" value="ECO:0007669"/>
    <property type="project" value="UniProtKB-UniRule"/>
</dbReference>
<dbReference type="CDD" id="cd03344">
    <property type="entry name" value="GroEL"/>
    <property type="match status" value="1"/>
</dbReference>
<dbReference type="FunFam" id="1.10.560.10:FF:000001">
    <property type="entry name" value="60 kDa chaperonin"/>
    <property type="match status" value="1"/>
</dbReference>
<dbReference type="FunFam" id="3.50.7.10:FF:000001">
    <property type="entry name" value="60 kDa chaperonin"/>
    <property type="match status" value="1"/>
</dbReference>
<dbReference type="Gene3D" id="3.50.7.10">
    <property type="entry name" value="GroEL"/>
    <property type="match status" value="1"/>
</dbReference>
<dbReference type="Gene3D" id="1.10.560.10">
    <property type="entry name" value="GroEL-like equatorial domain"/>
    <property type="match status" value="1"/>
</dbReference>
<dbReference type="Gene3D" id="3.30.260.10">
    <property type="entry name" value="TCP-1-like chaperonin intermediate domain"/>
    <property type="match status" value="1"/>
</dbReference>
<dbReference type="HAMAP" id="MF_00600">
    <property type="entry name" value="CH60"/>
    <property type="match status" value="1"/>
</dbReference>
<dbReference type="InterPro" id="IPR018370">
    <property type="entry name" value="Chaperonin_Cpn60_CS"/>
</dbReference>
<dbReference type="InterPro" id="IPR001844">
    <property type="entry name" value="Cpn60/GroEL"/>
</dbReference>
<dbReference type="InterPro" id="IPR002423">
    <property type="entry name" value="Cpn60/GroEL/TCP-1"/>
</dbReference>
<dbReference type="InterPro" id="IPR027409">
    <property type="entry name" value="GroEL-like_apical_dom_sf"/>
</dbReference>
<dbReference type="InterPro" id="IPR027413">
    <property type="entry name" value="GROEL-like_equatorial_sf"/>
</dbReference>
<dbReference type="InterPro" id="IPR027410">
    <property type="entry name" value="TCP-1-like_intermed_sf"/>
</dbReference>
<dbReference type="NCBIfam" id="TIGR02348">
    <property type="entry name" value="GroEL"/>
    <property type="match status" value="1"/>
</dbReference>
<dbReference type="NCBIfam" id="NF000592">
    <property type="entry name" value="PRK00013.1"/>
    <property type="match status" value="1"/>
</dbReference>
<dbReference type="NCBIfam" id="NF009487">
    <property type="entry name" value="PRK12849.1"/>
    <property type="match status" value="1"/>
</dbReference>
<dbReference type="NCBIfam" id="NF009488">
    <property type="entry name" value="PRK12850.1"/>
    <property type="match status" value="1"/>
</dbReference>
<dbReference type="NCBIfam" id="NF009489">
    <property type="entry name" value="PRK12851.1"/>
    <property type="match status" value="1"/>
</dbReference>
<dbReference type="PANTHER" id="PTHR45633">
    <property type="entry name" value="60 KDA HEAT SHOCK PROTEIN, MITOCHONDRIAL"/>
    <property type="match status" value="1"/>
</dbReference>
<dbReference type="Pfam" id="PF00118">
    <property type="entry name" value="Cpn60_TCP1"/>
    <property type="match status" value="1"/>
</dbReference>
<dbReference type="PRINTS" id="PR00298">
    <property type="entry name" value="CHAPERONIN60"/>
</dbReference>
<dbReference type="SUPFAM" id="SSF52029">
    <property type="entry name" value="GroEL apical domain-like"/>
    <property type="match status" value="1"/>
</dbReference>
<dbReference type="SUPFAM" id="SSF48592">
    <property type="entry name" value="GroEL equatorial domain-like"/>
    <property type="match status" value="1"/>
</dbReference>
<dbReference type="SUPFAM" id="SSF54849">
    <property type="entry name" value="GroEL-intermediate domain like"/>
    <property type="match status" value="1"/>
</dbReference>
<dbReference type="PROSITE" id="PS00296">
    <property type="entry name" value="CHAPERONINS_CPN60"/>
    <property type="match status" value="1"/>
</dbReference>
<accession>Q83WI8</accession>
<sequence length="548" mass="57550">MAAKDVKFGNDARVKMLEGVNVLADAVKVTLGPKGRNVVLDKSFGAPTITKDGVSVAREIELEDKFQNMGAQMVKEVASKANDAAGDGTTTATVLAQAIVNEGLKAVAAGMNPMDLKRGIDKAVIAAVEQPKRASVECTDTKAIAQVGTISANSDSSVGNIIAEAMEKVGRDGVITVEEGQALQDELDVVEGMQFDRGYLSPYFINNQEAGSVDLENPFILLIDKKVSNIRELLPALEAVAKASRPLLIIAEDVEGEALATLVVNNMRGIVKVAAVKAPGFGDRRKAMLQDIAILTGGIVISEEVGLELEKVALEDLGQAKRVAITKENTTIIDGVGEEAMIQGRVAQIRQQIEDATSDYDKEKLQERVAKLAGGVAVIKVGAATEVEMKEKKDRVEDALHATRAAVEEGVVAGGGVALIRAASKIVDLEGDNEEQNVGIRVALRAMEAPIRQITKNAGDEESVVANNVKAGEGSYGYNAATGEYGDMLEMGILDPTKVTRSALQFAASVAGLMITTEAMVTDLPQKEGAGMPDMGGMGGMGGMGGMM</sequence>
<comment type="function">
    <text evidence="1">Together with its co-chaperonin GroES, plays an essential role in assisting protein folding. The GroEL-GroES system forms a nano-cage that allows encapsulation of the non-native substrate proteins and provides a physical environment optimized to promote and accelerate protein folding.</text>
</comment>
<comment type="catalytic activity">
    <reaction evidence="1">
        <text>ATP + H2O + a folded polypeptide = ADP + phosphate + an unfolded polypeptide.</text>
        <dbReference type="EC" id="5.6.1.7"/>
    </reaction>
</comment>
<comment type="subunit">
    <text evidence="1">Forms a cylinder of 14 subunits composed of two heptameric rings stacked back-to-back. Interacts with the co-chaperonin GroES.</text>
</comment>
<comment type="subcellular location">
    <subcellularLocation>
        <location evidence="1">Cytoplasm</location>
    </subcellularLocation>
</comment>
<comment type="similarity">
    <text evidence="1">Belongs to the chaperonin (HSP60) family.</text>
</comment>
<proteinExistence type="inferred from homology"/>
<feature type="chain" id="PRO_0000063596" description="Chaperonin GroEL 1">
    <location>
        <begin position="1"/>
        <end position="548"/>
    </location>
</feature>
<feature type="binding site" evidence="1">
    <location>
        <begin position="30"/>
        <end position="33"/>
    </location>
    <ligand>
        <name>ATP</name>
        <dbReference type="ChEBI" id="CHEBI:30616"/>
    </ligand>
</feature>
<feature type="binding site" evidence="1">
    <location>
        <position position="51"/>
    </location>
    <ligand>
        <name>ATP</name>
        <dbReference type="ChEBI" id="CHEBI:30616"/>
    </ligand>
</feature>
<feature type="binding site" evidence="1">
    <location>
        <begin position="87"/>
        <end position="91"/>
    </location>
    <ligand>
        <name>ATP</name>
        <dbReference type="ChEBI" id="CHEBI:30616"/>
    </ligand>
</feature>
<feature type="binding site" evidence="1">
    <location>
        <position position="415"/>
    </location>
    <ligand>
        <name>ATP</name>
        <dbReference type="ChEBI" id="CHEBI:30616"/>
    </ligand>
</feature>
<feature type="binding site" evidence="1">
    <location>
        <begin position="479"/>
        <end position="481"/>
    </location>
    <ligand>
        <name>ATP</name>
        <dbReference type="ChEBI" id="CHEBI:30616"/>
    </ligand>
</feature>
<feature type="binding site" evidence="1">
    <location>
        <position position="495"/>
    </location>
    <ligand>
        <name>ATP</name>
        <dbReference type="ChEBI" id="CHEBI:30616"/>
    </ligand>
</feature>
<gene>
    <name evidence="1" type="primary">groEL1</name>
    <name evidence="1" type="synonym">groL1</name>
</gene>
<evidence type="ECO:0000255" key="1">
    <source>
        <dbReference type="HAMAP-Rule" id="MF_00600"/>
    </source>
</evidence>